<organism>
    <name type="scientific">Aspergillus clavatus (strain ATCC 1007 / CBS 513.65 / DSM 816 / NCTC 3887 / NRRL 1 / QM 1276 / 107)</name>
    <dbReference type="NCBI Taxonomy" id="344612"/>
    <lineage>
        <taxon>Eukaryota</taxon>
        <taxon>Fungi</taxon>
        <taxon>Dikarya</taxon>
        <taxon>Ascomycota</taxon>
        <taxon>Pezizomycotina</taxon>
        <taxon>Eurotiomycetes</taxon>
        <taxon>Eurotiomycetidae</taxon>
        <taxon>Eurotiales</taxon>
        <taxon>Aspergillaceae</taxon>
        <taxon>Aspergillus</taxon>
        <taxon>Aspergillus subgen. Fumigati</taxon>
    </lineage>
</organism>
<reference key="1">
    <citation type="journal article" date="2008" name="PLoS Genet.">
        <title>Genomic islands in the pathogenic filamentous fungus Aspergillus fumigatus.</title>
        <authorList>
            <person name="Fedorova N.D."/>
            <person name="Khaldi N."/>
            <person name="Joardar V.S."/>
            <person name="Maiti R."/>
            <person name="Amedeo P."/>
            <person name="Anderson M.J."/>
            <person name="Crabtree J."/>
            <person name="Silva J.C."/>
            <person name="Badger J.H."/>
            <person name="Albarraq A."/>
            <person name="Angiuoli S."/>
            <person name="Bussey H."/>
            <person name="Bowyer P."/>
            <person name="Cotty P.J."/>
            <person name="Dyer P.S."/>
            <person name="Egan A."/>
            <person name="Galens K."/>
            <person name="Fraser-Liggett C.M."/>
            <person name="Haas B.J."/>
            <person name="Inman J.M."/>
            <person name="Kent R."/>
            <person name="Lemieux S."/>
            <person name="Malavazi I."/>
            <person name="Orvis J."/>
            <person name="Roemer T."/>
            <person name="Ronning C.M."/>
            <person name="Sundaram J.P."/>
            <person name="Sutton G."/>
            <person name="Turner G."/>
            <person name="Venter J.C."/>
            <person name="White O.R."/>
            <person name="Whitty B.R."/>
            <person name="Youngman P."/>
            <person name="Wolfe K.H."/>
            <person name="Goldman G.H."/>
            <person name="Wortman J.R."/>
            <person name="Jiang B."/>
            <person name="Denning D.W."/>
            <person name="Nierman W.C."/>
        </authorList>
    </citation>
    <scope>NUCLEOTIDE SEQUENCE [LARGE SCALE GENOMIC DNA]</scope>
    <source>
        <strain>ATCC 1007 / CBS 513.65 / DSM 816 / NCTC 3887 / NRRL 1 / QM 1276 / 107</strain>
    </source>
</reference>
<dbReference type="EC" id="4.2.3.4" evidence="1"/>
<dbReference type="EC" id="2.5.1.19" evidence="1"/>
<dbReference type="EC" id="2.7.1.71" evidence="1"/>
<dbReference type="EC" id="4.2.1.10" evidence="1"/>
<dbReference type="EC" id="1.1.1.25" evidence="1"/>
<dbReference type="EMBL" id="DS027059">
    <property type="protein sequence ID" value="EAW07456.1"/>
    <property type="molecule type" value="Genomic_DNA"/>
</dbReference>
<dbReference type="RefSeq" id="XP_001268882.1">
    <property type="nucleotide sequence ID" value="XM_001268881.1"/>
</dbReference>
<dbReference type="SMR" id="A1CP85"/>
<dbReference type="STRING" id="344612.A1CP85"/>
<dbReference type="EnsemblFungi" id="EAW07456">
    <property type="protein sequence ID" value="EAW07456"/>
    <property type="gene ID" value="ACLA_021700"/>
</dbReference>
<dbReference type="GeneID" id="4701271"/>
<dbReference type="KEGG" id="act:ACLA_021700"/>
<dbReference type="VEuPathDB" id="FungiDB:ACLA_021700"/>
<dbReference type="eggNOG" id="KOG0692">
    <property type="taxonomic scope" value="Eukaryota"/>
</dbReference>
<dbReference type="HOGENOM" id="CLU_001201_1_2_1"/>
<dbReference type="OMA" id="SWANMSW"/>
<dbReference type="OrthoDB" id="197068at2759"/>
<dbReference type="UniPathway" id="UPA00053">
    <property type="reaction ID" value="UER00085"/>
</dbReference>
<dbReference type="UniPathway" id="UPA00053">
    <property type="reaction ID" value="UER00086"/>
</dbReference>
<dbReference type="UniPathway" id="UPA00053">
    <property type="reaction ID" value="UER00087"/>
</dbReference>
<dbReference type="UniPathway" id="UPA00053">
    <property type="reaction ID" value="UER00088"/>
</dbReference>
<dbReference type="UniPathway" id="UPA00053">
    <property type="reaction ID" value="UER00089"/>
</dbReference>
<dbReference type="Proteomes" id="UP000006701">
    <property type="component" value="Unassembled WGS sequence"/>
</dbReference>
<dbReference type="GO" id="GO:0005737">
    <property type="term" value="C:cytoplasm"/>
    <property type="evidence" value="ECO:0007669"/>
    <property type="project" value="UniProtKB-SubCell"/>
</dbReference>
<dbReference type="GO" id="GO:0003855">
    <property type="term" value="F:3-dehydroquinate dehydratase activity"/>
    <property type="evidence" value="ECO:0007669"/>
    <property type="project" value="UniProtKB-UniRule"/>
</dbReference>
<dbReference type="GO" id="GO:0003856">
    <property type="term" value="F:3-dehydroquinate synthase activity"/>
    <property type="evidence" value="ECO:0007669"/>
    <property type="project" value="UniProtKB-UniRule"/>
</dbReference>
<dbReference type="GO" id="GO:0003866">
    <property type="term" value="F:3-phosphoshikimate 1-carboxyvinyltransferase activity"/>
    <property type="evidence" value="ECO:0007669"/>
    <property type="project" value="UniProtKB-UniRule"/>
</dbReference>
<dbReference type="GO" id="GO:0005524">
    <property type="term" value="F:ATP binding"/>
    <property type="evidence" value="ECO:0007669"/>
    <property type="project" value="UniProtKB-UniRule"/>
</dbReference>
<dbReference type="GO" id="GO:0046872">
    <property type="term" value="F:metal ion binding"/>
    <property type="evidence" value="ECO:0007669"/>
    <property type="project" value="UniProtKB-UniRule"/>
</dbReference>
<dbReference type="GO" id="GO:0004764">
    <property type="term" value="F:shikimate 3-dehydrogenase (NADP+) activity"/>
    <property type="evidence" value="ECO:0007669"/>
    <property type="project" value="UniProtKB-UniRule"/>
</dbReference>
<dbReference type="GO" id="GO:0004765">
    <property type="term" value="F:shikimate kinase activity"/>
    <property type="evidence" value="ECO:0007669"/>
    <property type="project" value="UniProtKB-UniRule"/>
</dbReference>
<dbReference type="GO" id="GO:0008652">
    <property type="term" value="P:amino acid biosynthetic process"/>
    <property type="evidence" value="ECO:0007669"/>
    <property type="project" value="UniProtKB-KW"/>
</dbReference>
<dbReference type="GO" id="GO:0009073">
    <property type="term" value="P:aromatic amino acid family biosynthetic process"/>
    <property type="evidence" value="ECO:0007669"/>
    <property type="project" value="UniProtKB-UniRule"/>
</dbReference>
<dbReference type="GO" id="GO:0009423">
    <property type="term" value="P:chorismate biosynthetic process"/>
    <property type="evidence" value="ECO:0007669"/>
    <property type="project" value="UniProtKB-UniRule"/>
</dbReference>
<dbReference type="CDD" id="cd00502">
    <property type="entry name" value="DHQase_I"/>
    <property type="match status" value="1"/>
</dbReference>
<dbReference type="CDD" id="cd08195">
    <property type="entry name" value="DHQS"/>
    <property type="match status" value="1"/>
</dbReference>
<dbReference type="CDD" id="cd01556">
    <property type="entry name" value="EPSP_synthase"/>
    <property type="match status" value="1"/>
</dbReference>
<dbReference type="CDD" id="cd01065">
    <property type="entry name" value="NAD_bind_Shikimate_DH"/>
    <property type="match status" value="1"/>
</dbReference>
<dbReference type="CDD" id="cd00464">
    <property type="entry name" value="SK"/>
    <property type="match status" value="1"/>
</dbReference>
<dbReference type="FunFam" id="1.20.1090.10:FF:000007">
    <property type="entry name" value="Pentafunctional AROM polypeptide"/>
    <property type="match status" value="1"/>
</dbReference>
<dbReference type="FunFam" id="3.20.20.70:FF:000135">
    <property type="entry name" value="Pentafunctional AROM polypeptide"/>
    <property type="match status" value="1"/>
</dbReference>
<dbReference type="FunFam" id="3.40.50.10860:FF:000015">
    <property type="entry name" value="Pentafunctional AROM polypeptide"/>
    <property type="match status" value="1"/>
</dbReference>
<dbReference type="FunFam" id="3.40.50.1970:FF:000007">
    <property type="entry name" value="Pentafunctional AROM polypeptide"/>
    <property type="match status" value="1"/>
</dbReference>
<dbReference type="FunFam" id="3.40.50.300:FF:001256">
    <property type="entry name" value="Pentafunctional AROM polypeptide"/>
    <property type="match status" value="1"/>
</dbReference>
<dbReference type="FunFam" id="3.40.50.720:FF:000483">
    <property type="entry name" value="Pentafunctional AROM polypeptide"/>
    <property type="match status" value="1"/>
</dbReference>
<dbReference type="FunFam" id="3.65.10.10:FF:000007">
    <property type="entry name" value="Pentafunctional AROM polypeptide"/>
    <property type="match status" value="1"/>
</dbReference>
<dbReference type="FunFam" id="3.65.10.10:FF:000008">
    <property type="entry name" value="Pentafunctional AROM polypeptide"/>
    <property type="match status" value="1"/>
</dbReference>
<dbReference type="Gene3D" id="3.40.50.1970">
    <property type="match status" value="1"/>
</dbReference>
<dbReference type="Gene3D" id="3.20.20.70">
    <property type="entry name" value="Aldolase class I"/>
    <property type="match status" value="1"/>
</dbReference>
<dbReference type="Gene3D" id="1.20.1090.10">
    <property type="entry name" value="Dehydroquinate synthase-like - alpha domain"/>
    <property type="match status" value="1"/>
</dbReference>
<dbReference type="Gene3D" id="3.65.10.10">
    <property type="entry name" value="Enolpyruvate transferase domain"/>
    <property type="match status" value="2"/>
</dbReference>
<dbReference type="Gene3D" id="3.40.50.10860">
    <property type="entry name" value="Leucine Dehydrogenase, chain A, domain 1"/>
    <property type="match status" value="1"/>
</dbReference>
<dbReference type="Gene3D" id="3.40.50.720">
    <property type="entry name" value="NAD(P)-binding Rossmann-like Domain"/>
    <property type="match status" value="1"/>
</dbReference>
<dbReference type="Gene3D" id="3.40.50.300">
    <property type="entry name" value="P-loop containing nucleotide triphosphate hydrolases"/>
    <property type="match status" value="1"/>
</dbReference>
<dbReference type="HAMAP" id="MF_00210">
    <property type="entry name" value="EPSP_synth"/>
    <property type="match status" value="1"/>
</dbReference>
<dbReference type="HAMAP" id="MF_03143">
    <property type="entry name" value="Pentafunct_AroM"/>
    <property type="match status" value="1"/>
</dbReference>
<dbReference type="HAMAP" id="MF_00109">
    <property type="entry name" value="Shikimate_kinase"/>
    <property type="match status" value="1"/>
</dbReference>
<dbReference type="InterPro" id="IPR018508">
    <property type="entry name" value="3-dehydroquinate_DH_AS"/>
</dbReference>
<dbReference type="InterPro" id="IPR013785">
    <property type="entry name" value="Aldolase_TIM"/>
</dbReference>
<dbReference type="InterPro" id="IPR046346">
    <property type="entry name" value="Aminoacid_DH-like_N_sf"/>
</dbReference>
<dbReference type="InterPro" id="IPR016037">
    <property type="entry name" value="DHQ_synth_AroB"/>
</dbReference>
<dbReference type="InterPro" id="IPR030960">
    <property type="entry name" value="DHQS/DOIS_N"/>
</dbReference>
<dbReference type="InterPro" id="IPR056179">
    <property type="entry name" value="DHQS_C"/>
</dbReference>
<dbReference type="InterPro" id="IPR001381">
    <property type="entry name" value="DHquinase_I"/>
</dbReference>
<dbReference type="InterPro" id="IPR001986">
    <property type="entry name" value="Enolpyruvate_Tfrase_dom"/>
</dbReference>
<dbReference type="InterPro" id="IPR036968">
    <property type="entry name" value="Enolpyruvate_Tfrase_sf"/>
</dbReference>
<dbReference type="InterPro" id="IPR006264">
    <property type="entry name" value="EPSP_synthase"/>
</dbReference>
<dbReference type="InterPro" id="IPR023193">
    <property type="entry name" value="EPSP_synthase_CS"/>
</dbReference>
<dbReference type="InterPro" id="IPR036291">
    <property type="entry name" value="NAD(P)-bd_dom_sf"/>
</dbReference>
<dbReference type="InterPro" id="IPR027417">
    <property type="entry name" value="P-loop_NTPase"/>
</dbReference>
<dbReference type="InterPro" id="IPR008289">
    <property type="entry name" value="Pentafunct_AroM"/>
</dbReference>
<dbReference type="InterPro" id="IPR013792">
    <property type="entry name" value="RNA3'P_cycl/enolpyr_Trfase_a/b"/>
</dbReference>
<dbReference type="InterPro" id="IPR031322">
    <property type="entry name" value="Shikimate/glucono_kinase"/>
</dbReference>
<dbReference type="InterPro" id="IPR013708">
    <property type="entry name" value="Shikimate_DH-bd_N"/>
</dbReference>
<dbReference type="InterPro" id="IPR010110">
    <property type="entry name" value="Shikimate_DH_AroM-type"/>
</dbReference>
<dbReference type="InterPro" id="IPR000623">
    <property type="entry name" value="Shikimate_kinase/TSH1"/>
</dbReference>
<dbReference type="InterPro" id="IPR023000">
    <property type="entry name" value="Shikimate_kinase_CS"/>
</dbReference>
<dbReference type="NCBIfam" id="TIGR01356">
    <property type="entry name" value="aroA"/>
    <property type="match status" value="1"/>
</dbReference>
<dbReference type="NCBIfam" id="TIGR01357">
    <property type="entry name" value="aroB"/>
    <property type="match status" value="1"/>
</dbReference>
<dbReference type="NCBIfam" id="TIGR01093">
    <property type="entry name" value="aroD"/>
    <property type="match status" value="1"/>
</dbReference>
<dbReference type="NCBIfam" id="TIGR01809">
    <property type="entry name" value="Shik-DH-AROM"/>
    <property type="match status" value="1"/>
</dbReference>
<dbReference type="PANTHER" id="PTHR21090">
    <property type="entry name" value="AROM/DEHYDROQUINATE SYNTHASE"/>
    <property type="match status" value="1"/>
</dbReference>
<dbReference type="PANTHER" id="PTHR21090:SF5">
    <property type="entry name" value="PENTAFUNCTIONAL AROM POLYPEPTIDE"/>
    <property type="match status" value="1"/>
</dbReference>
<dbReference type="Pfam" id="PF01761">
    <property type="entry name" value="DHQ_synthase"/>
    <property type="match status" value="1"/>
</dbReference>
<dbReference type="Pfam" id="PF24621">
    <property type="entry name" value="DHQS_C"/>
    <property type="match status" value="1"/>
</dbReference>
<dbReference type="Pfam" id="PF01487">
    <property type="entry name" value="DHquinase_I"/>
    <property type="match status" value="1"/>
</dbReference>
<dbReference type="Pfam" id="PF00275">
    <property type="entry name" value="EPSP_synthase"/>
    <property type="match status" value="1"/>
</dbReference>
<dbReference type="Pfam" id="PF08501">
    <property type="entry name" value="Shikimate_dh_N"/>
    <property type="match status" value="1"/>
</dbReference>
<dbReference type="Pfam" id="PF01202">
    <property type="entry name" value="SKI"/>
    <property type="match status" value="1"/>
</dbReference>
<dbReference type="PIRSF" id="PIRSF000514">
    <property type="entry name" value="Pentafunct_AroM"/>
    <property type="match status" value="1"/>
</dbReference>
<dbReference type="PRINTS" id="PR01100">
    <property type="entry name" value="SHIKIMTKNASE"/>
</dbReference>
<dbReference type="SUPFAM" id="SSF51569">
    <property type="entry name" value="Aldolase"/>
    <property type="match status" value="1"/>
</dbReference>
<dbReference type="SUPFAM" id="SSF53223">
    <property type="entry name" value="Aminoacid dehydrogenase-like, N-terminal domain"/>
    <property type="match status" value="1"/>
</dbReference>
<dbReference type="SUPFAM" id="SSF56796">
    <property type="entry name" value="Dehydroquinate synthase-like"/>
    <property type="match status" value="1"/>
</dbReference>
<dbReference type="SUPFAM" id="SSF55205">
    <property type="entry name" value="EPT/RTPC-like"/>
    <property type="match status" value="1"/>
</dbReference>
<dbReference type="SUPFAM" id="SSF51735">
    <property type="entry name" value="NAD(P)-binding Rossmann-fold domains"/>
    <property type="match status" value="1"/>
</dbReference>
<dbReference type="SUPFAM" id="SSF52540">
    <property type="entry name" value="P-loop containing nucleoside triphosphate hydrolases"/>
    <property type="match status" value="1"/>
</dbReference>
<dbReference type="PROSITE" id="PS01028">
    <property type="entry name" value="DEHYDROQUINASE_I"/>
    <property type="match status" value="1"/>
</dbReference>
<dbReference type="PROSITE" id="PS00104">
    <property type="entry name" value="EPSP_SYNTHASE_1"/>
    <property type="match status" value="1"/>
</dbReference>
<dbReference type="PROSITE" id="PS00885">
    <property type="entry name" value="EPSP_SYNTHASE_2"/>
    <property type="match status" value="1"/>
</dbReference>
<dbReference type="PROSITE" id="PS01128">
    <property type="entry name" value="SHIKIMATE_KINASE"/>
    <property type="match status" value="1"/>
</dbReference>
<gene>
    <name evidence="1" type="primary">aroM</name>
    <name type="ORF">ACLA_021700</name>
</gene>
<proteinExistence type="inferred from homology"/>
<name>ARO1_ASPCL</name>
<feature type="chain" id="PRO_0000406703" description="Pentafunctional AROM polypeptide">
    <location>
        <begin position="1"/>
        <end position="1587"/>
    </location>
</feature>
<feature type="region of interest" description="3-dehydroquinate synthase">
    <location>
        <begin position="1"/>
        <end position="384"/>
    </location>
</feature>
<feature type="region of interest" description="EPSP synthase">
    <location>
        <begin position="397"/>
        <end position="842"/>
    </location>
</feature>
<feature type="region of interest" description="Shikimate kinase">
    <location>
        <begin position="864"/>
        <end position="1055"/>
    </location>
</feature>
<feature type="region of interest" description="3-dehydroquinase">
    <location>
        <begin position="1056"/>
        <end position="1276"/>
    </location>
</feature>
<feature type="region of interest" description="Shikimate dehydrogenase">
    <location>
        <begin position="1289"/>
        <end position="1587"/>
    </location>
</feature>
<feature type="active site" description="Proton acceptor; for 3-dehydroquinate synthase activity" evidence="1">
    <location>
        <position position="260"/>
    </location>
</feature>
<feature type="active site" description="Proton acceptor; for 3-dehydroquinate synthase activity" evidence="1">
    <location>
        <position position="275"/>
    </location>
</feature>
<feature type="active site" description="For EPSP synthase activity" evidence="1">
    <location>
        <position position="824"/>
    </location>
</feature>
<feature type="active site" description="Proton acceptor; for 3-dehydroquinate dehydratase activity" evidence="1">
    <location>
        <position position="1179"/>
    </location>
</feature>
<feature type="active site" description="Schiff-base intermediate with substrate; for 3-dehydroquinate dehydratase activity" evidence="1">
    <location>
        <position position="1207"/>
    </location>
</feature>
<feature type="binding site" evidence="1">
    <location>
        <begin position="44"/>
        <end position="46"/>
    </location>
    <ligand>
        <name>NAD(+)</name>
        <dbReference type="ChEBI" id="CHEBI:57540"/>
    </ligand>
</feature>
<feature type="binding site" evidence="1">
    <location>
        <begin position="81"/>
        <end position="84"/>
    </location>
    <ligand>
        <name>NAD(+)</name>
        <dbReference type="ChEBI" id="CHEBI:57540"/>
    </ligand>
</feature>
<feature type="binding site" evidence="1">
    <location>
        <begin position="114"/>
        <end position="116"/>
    </location>
    <ligand>
        <name>NAD(+)</name>
        <dbReference type="ChEBI" id="CHEBI:57540"/>
    </ligand>
</feature>
<feature type="binding site" evidence="1">
    <location>
        <position position="119"/>
    </location>
    <ligand>
        <name>NAD(+)</name>
        <dbReference type="ChEBI" id="CHEBI:57540"/>
    </ligand>
</feature>
<feature type="binding site" evidence="1">
    <location>
        <position position="130"/>
    </location>
    <ligand>
        <name>7-phospho-2-dehydro-3-deoxy-D-arabino-heptonate</name>
        <dbReference type="ChEBI" id="CHEBI:58394"/>
    </ligand>
</feature>
<feature type="binding site" evidence="1">
    <location>
        <begin position="139"/>
        <end position="140"/>
    </location>
    <ligand>
        <name>NAD(+)</name>
        <dbReference type="ChEBI" id="CHEBI:57540"/>
    </ligand>
</feature>
<feature type="binding site" evidence="1">
    <location>
        <position position="146"/>
    </location>
    <ligand>
        <name>7-phospho-2-dehydro-3-deoxy-D-arabino-heptonate</name>
        <dbReference type="ChEBI" id="CHEBI:58394"/>
    </ligand>
</feature>
<feature type="binding site" evidence="1">
    <location>
        <position position="152"/>
    </location>
    <ligand>
        <name>7-phospho-2-dehydro-3-deoxy-D-arabino-heptonate</name>
        <dbReference type="ChEBI" id="CHEBI:58394"/>
    </ligand>
</feature>
<feature type="binding site" evidence="1">
    <location>
        <position position="161"/>
    </location>
    <ligand>
        <name>NAD(+)</name>
        <dbReference type="ChEBI" id="CHEBI:57540"/>
    </ligand>
</feature>
<feature type="binding site" evidence="1">
    <location>
        <position position="162"/>
    </location>
    <ligand>
        <name>7-phospho-2-dehydro-3-deoxy-D-arabino-heptonate</name>
        <dbReference type="ChEBI" id="CHEBI:58394"/>
    </ligand>
</feature>
<feature type="binding site" evidence="1">
    <location>
        <begin position="179"/>
        <end position="182"/>
    </location>
    <ligand>
        <name>NAD(+)</name>
        <dbReference type="ChEBI" id="CHEBI:57540"/>
    </ligand>
</feature>
<feature type="binding site" evidence="1">
    <location>
        <position position="190"/>
    </location>
    <ligand>
        <name>NAD(+)</name>
        <dbReference type="ChEBI" id="CHEBI:57540"/>
    </ligand>
</feature>
<feature type="binding site" evidence="1">
    <location>
        <begin position="194"/>
        <end position="197"/>
    </location>
    <ligand>
        <name>7-phospho-2-dehydro-3-deoxy-D-arabino-heptonate</name>
        <dbReference type="ChEBI" id="CHEBI:58394"/>
    </ligand>
</feature>
<feature type="binding site" evidence="1">
    <location>
        <position position="194"/>
    </location>
    <ligand>
        <name>Zn(2+)</name>
        <dbReference type="ChEBI" id="CHEBI:29105"/>
        <note>catalytic</note>
    </ligand>
</feature>
<feature type="binding site" evidence="1">
    <location>
        <position position="250"/>
    </location>
    <ligand>
        <name>7-phospho-2-dehydro-3-deoxy-D-arabino-heptonate</name>
        <dbReference type="ChEBI" id="CHEBI:58394"/>
    </ligand>
</feature>
<feature type="binding site" evidence="1">
    <location>
        <begin position="264"/>
        <end position="268"/>
    </location>
    <ligand>
        <name>7-phospho-2-dehydro-3-deoxy-D-arabino-heptonate</name>
        <dbReference type="ChEBI" id="CHEBI:58394"/>
    </ligand>
</feature>
<feature type="binding site" evidence="1">
    <location>
        <position position="271"/>
    </location>
    <ligand>
        <name>7-phospho-2-dehydro-3-deoxy-D-arabino-heptonate</name>
        <dbReference type="ChEBI" id="CHEBI:58394"/>
    </ligand>
</feature>
<feature type="binding site" evidence="1">
    <location>
        <position position="271"/>
    </location>
    <ligand>
        <name>Zn(2+)</name>
        <dbReference type="ChEBI" id="CHEBI:29105"/>
        <note>catalytic</note>
    </ligand>
</feature>
<feature type="binding site" evidence="1">
    <location>
        <position position="287"/>
    </location>
    <ligand>
        <name>7-phospho-2-dehydro-3-deoxy-D-arabino-heptonate</name>
        <dbReference type="ChEBI" id="CHEBI:58394"/>
    </ligand>
</feature>
<feature type="binding site" evidence="1">
    <location>
        <position position="287"/>
    </location>
    <ligand>
        <name>Zn(2+)</name>
        <dbReference type="ChEBI" id="CHEBI:29105"/>
        <note>catalytic</note>
    </ligand>
</feature>
<feature type="binding site" evidence="1">
    <location>
        <position position="356"/>
    </location>
    <ligand>
        <name>7-phospho-2-dehydro-3-deoxy-D-arabino-heptonate</name>
        <dbReference type="ChEBI" id="CHEBI:58394"/>
    </ligand>
</feature>
<feature type="binding site" evidence="1">
    <location>
        <begin position="871"/>
        <end position="878"/>
    </location>
    <ligand>
        <name>ATP</name>
        <dbReference type="ChEBI" id="CHEBI:30616"/>
    </ligand>
</feature>
<comment type="function">
    <text evidence="1">The AROM polypeptide catalyzes 5 consecutive enzymatic reactions in prechorismate polyaromatic amino acid biosynthesis.</text>
</comment>
<comment type="catalytic activity">
    <reaction evidence="1">
        <text>7-phospho-2-dehydro-3-deoxy-D-arabino-heptonate = 3-dehydroquinate + phosphate</text>
        <dbReference type="Rhea" id="RHEA:21968"/>
        <dbReference type="ChEBI" id="CHEBI:32364"/>
        <dbReference type="ChEBI" id="CHEBI:43474"/>
        <dbReference type="ChEBI" id="CHEBI:58394"/>
        <dbReference type="EC" id="4.2.3.4"/>
    </reaction>
</comment>
<comment type="catalytic activity">
    <reaction evidence="1">
        <text>3-dehydroquinate = 3-dehydroshikimate + H2O</text>
        <dbReference type="Rhea" id="RHEA:21096"/>
        <dbReference type="ChEBI" id="CHEBI:15377"/>
        <dbReference type="ChEBI" id="CHEBI:16630"/>
        <dbReference type="ChEBI" id="CHEBI:32364"/>
        <dbReference type="EC" id="4.2.1.10"/>
    </reaction>
</comment>
<comment type="catalytic activity">
    <reaction evidence="1">
        <text>shikimate + NADP(+) = 3-dehydroshikimate + NADPH + H(+)</text>
        <dbReference type="Rhea" id="RHEA:17737"/>
        <dbReference type="ChEBI" id="CHEBI:15378"/>
        <dbReference type="ChEBI" id="CHEBI:16630"/>
        <dbReference type="ChEBI" id="CHEBI:36208"/>
        <dbReference type="ChEBI" id="CHEBI:57783"/>
        <dbReference type="ChEBI" id="CHEBI:58349"/>
        <dbReference type="EC" id="1.1.1.25"/>
    </reaction>
</comment>
<comment type="catalytic activity">
    <reaction evidence="1">
        <text>shikimate + ATP = 3-phosphoshikimate + ADP + H(+)</text>
        <dbReference type="Rhea" id="RHEA:13121"/>
        <dbReference type="ChEBI" id="CHEBI:15378"/>
        <dbReference type="ChEBI" id="CHEBI:30616"/>
        <dbReference type="ChEBI" id="CHEBI:36208"/>
        <dbReference type="ChEBI" id="CHEBI:145989"/>
        <dbReference type="ChEBI" id="CHEBI:456216"/>
        <dbReference type="EC" id="2.7.1.71"/>
    </reaction>
</comment>
<comment type="catalytic activity">
    <reaction evidence="1">
        <text>3-phosphoshikimate + phosphoenolpyruvate = 5-O-(1-carboxyvinyl)-3-phosphoshikimate + phosphate</text>
        <dbReference type="Rhea" id="RHEA:21256"/>
        <dbReference type="ChEBI" id="CHEBI:43474"/>
        <dbReference type="ChEBI" id="CHEBI:57701"/>
        <dbReference type="ChEBI" id="CHEBI:58702"/>
        <dbReference type="ChEBI" id="CHEBI:145989"/>
        <dbReference type="EC" id="2.5.1.19"/>
    </reaction>
</comment>
<comment type="cofactor">
    <cofactor>
        <name>Zn(2+)</name>
        <dbReference type="ChEBI" id="CHEBI:29105"/>
    </cofactor>
    <text>Binds 2 Zn(2+) ions per subunit.</text>
</comment>
<comment type="pathway">
    <text evidence="1">Metabolic intermediate biosynthesis; chorismate biosynthesis; chorismate from D-erythrose 4-phosphate and phosphoenolpyruvate: step 2/7.</text>
</comment>
<comment type="pathway">
    <text evidence="1">Metabolic intermediate biosynthesis; chorismate biosynthesis; chorismate from D-erythrose 4-phosphate and phosphoenolpyruvate: step 3/7.</text>
</comment>
<comment type="pathway">
    <text evidence="1">Metabolic intermediate biosynthesis; chorismate biosynthesis; chorismate from D-erythrose 4-phosphate and phosphoenolpyruvate: step 4/7.</text>
</comment>
<comment type="pathway">
    <text evidence="1">Metabolic intermediate biosynthesis; chorismate biosynthesis; chorismate from D-erythrose 4-phosphate and phosphoenolpyruvate: step 5/7.</text>
</comment>
<comment type="pathway">
    <text evidence="1">Metabolic intermediate biosynthesis; chorismate biosynthesis; chorismate from D-erythrose 4-phosphate and phosphoenolpyruvate: step 6/7.</text>
</comment>
<comment type="subunit">
    <text evidence="1">Homodimer.</text>
</comment>
<comment type="subcellular location">
    <subcellularLocation>
        <location evidence="1">Cytoplasm</location>
    </subcellularLocation>
</comment>
<comment type="similarity">
    <text evidence="1">In the N-terminal section; belongs to the sugar phosphate cyclases superfamily. Dehydroquinate synthase family.</text>
</comment>
<comment type="similarity">
    <text evidence="1">In the 2nd section; belongs to the EPSP synthase family.</text>
</comment>
<comment type="similarity">
    <text evidence="1">In the 3rd section; belongs to the shikimate kinase family.</text>
</comment>
<comment type="similarity">
    <text evidence="1">In the 4th section; belongs to the type-I 3-dehydroquinase family.</text>
</comment>
<comment type="similarity">
    <text evidence="1">In the C-terminal section; belongs to the shikimate dehydrogenase family.</text>
</comment>
<sequence>MIEPTKISILGQESIVADFGLWRNYVAKDLISGCPSTTYVLITDTNIGSIYTPSFQKSFEEAAAAVTPSPRLLTYYAPPGEVSKSRQTKADIEDWMLSQSPPCGRDTVIIALGGGVIGDLTGFVAATYMRGVRFVQVPTTLLAMVDSSIGGKTAIDTPLGKNLIGAIWQPARIYIDLEFLETLPVREFINGMAEVIKTAAISSEEEFTALEDNAETILAAVRREVKPGQRRFDGIEQILKARILASARHKAFVVSEDEREGGLRNLLNWGHSIGHAIEAILTPQILHGECVAIGMVKEAELARHLGVLKGVAVARIVKCIAAYGLPTSLKDARIRKLTAGKHCSVDQLLFNMALDKKNDGPKKKVVLLSAIGRTYEPRASVVANEDIGVVLAPSIEVFPGVSPKSTVICAPPGSKSISNRALVLAALGSGTCRIKNLLHSDDTEVMLNALERIGAATFSWEEEGEVLVVNGKGGALQAHPSELYLGNAGTASRFLTTVATLATPSNVDFSILTGNNRMKQRPIGDLVEALIANGAQVEYMESKGSLPLKIAASGGFTGGQINLAAKVSSQYVSSLLMCAPYAKEPVTLKLVGGKPISQPYIDMTTAMMRSFGIDVQKSTTEEHTYHIPQGRYTNPAEYVVESDASSATYPLAIAAVTGTTCTVPNIGSKSLQGDARFAVDVLRPMGCTVEQTDTSTTVTGPADGVLRPLPNVDMEPMTDAFLGASVLAAIARGEGSNHTTRIYGIANQRVKECNRIKAMHDELAKFGVVCREHEDGLEIDGIDRANLRQPAGGVFCYDDHRVAFSFSVLSLVAPKPTLILEKECVGKTWPGWWDTLRLKFAVKLEGRELKEAESPVLTSAEKASASVFIIGMRGAGKTTSGHWVASTLNRPFIDLDDELERIEGMTIPDIIKERGWQGFRDAELSLLQRTMKERPTGHVFACGGGVVEVPEARKLLINWHKSKGNVLLIMRDIKQVMDFLNIDKTRPAYVEDMMGVWLRRKPWFQECSNIQYYSQHASSGLTRASEDFARFVKIVTGQVDSLGAIKKKQHSFFVSLTLPDLRPAGDILEQACVGSDAVELRVDLLKDPSSSNGIPSVDYVAEQMSFLRSHTTLPLIFTIRTKSQGGFFPDEAHEEAMQLYQLAFRSGCEFVDLEIAFPDELLRTVSEMKGYSKIIASHHDPKGELSWANMSWMKYYNRALEYGDVIKLVGVATKLDDNTALRKFKSWAEEAHDVPLIAINMGDNGQLSRILNGFMTPVSHPALPFKAAPGQLSATEICKGLSLMGQIKKKRFALFGTPISESRSPALHNSLFAELGLPHEYTRLETANAEDVKEFIRAPDFGGASVTIPLKLDIMPLLDEIAPEAEIIGAVNTIVPVSDGEGKPQRLVGHNTDWQGMVQCLRNAGAYGSNGDASALVVGGGGTCRAGIYALHQMGYSPIYIVGRNLGKLQAMASTFPSSYNIRILEGNETLEHVPHVAIGTIPGDQPIDPGMREILCHMFARAEEADADAVRSIEGSPRVLLEMAYKPPVTALMQLATDAGWTTIPGLEVLVGQGFYQGGITQFQHWTGIRPLYEHARDAVLGTKAD</sequence>
<accession>A1CP85</accession>
<protein>
    <recommendedName>
        <fullName evidence="1">Pentafunctional AROM polypeptide</fullName>
    </recommendedName>
    <domain>
        <recommendedName>
            <fullName evidence="1">3-dehydroquinate synthase</fullName>
            <shortName evidence="1">DHQS</shortName>
            <ecNumber evidence="1">4.2.3.4</ecNumber>
        </recommendedName>
    </domain>
    <domain>
        <recommendedName>
            <fullName evidence="1">3-phosphoshikimate 1-carboxyvinyltransferase</fullName>
            <ecNumber evidence="1">2.5.1.19</ecNumber>
        </recommendedName>
        <alternativeName>
            <fullName evidence="1">5-enolpyruvylshikimate-3-phosphate synthase</fullName>
            <shortName evidence="1">EPSP synthase</shortName>
            <shortName evidence="1">EPSPS</shortName>
        </alternativeName>
    </domain>
    <domain>
        <recommendedName>
            <fullName evidence="1">Shikimate kinase</fullName>
            <shortName evidence="1">SK</shortName>
            <ecNumber evidence="1">2.7.1.71</ecNumber>
        </recommendedName>
    </domain>
    <domain>
        <recommendedName>
            <fullName evidence="1">3-dehydroquinate dehydratase</fullName>
            <shortName evidence="1">3-dehydroquinase</shortName>
            <ecNumber evidence="1">4.2.1.10</ecNumber>
        </recommendedName>
    </domain>
    <domain>
        <recommendedName>
            <fullName evidence="1">Shikimate dehydrogenase</fullName>
            <ecNumber evidence="1">1.1.1.25</ecNumber>
        </recommendedName>
    </domain>
</protein>
<keyword id="KW-0028">Amino-acid biosynthesis</keyword>
<keyword id="KW-0057">Aromatic amino acid biosynthesis</keyword>
<keyword id="KW-0067">ATP-binding</keyword>
<keyword id="KW-0963">Cytoplasm</keyword>
<keyword id="KW-0418">Kinase</keyword>
<keyword id="KW-0456">Lyase</keyword>
<keyword id="KW-0479">Metal-binding</keyword>
<keyword id="KW-0511">Multifunctional enzyme</keyword>
<keyword id="KW-0521">NADP</keyword>
<keyword id="KW-0547">Nucleotide-binding</keyword>
<keyword id="KW-0560">Oxidoreductase</keyword>
<keyword id="KW-1185">Reference proteome</keyword>
<keyword id="KW-0808">Transferase</keyword>
<keyword id="KW-0862">Zinc</keyword>
<evidence type="ECO:0000255" key="1">
    <source>
        <dbReference type="HAMAP-Rule" id="MF_03143"/>
    </source>
</evidence>